<proteinExistence type="inferred from homology"/>
<reference key="1">
    <citation type="journal article" date="2009" name="Genome Res.">
        <title>Comparative genomics of the fungal pathogens Candida dubliniensis and Candida albicans.</title>
        <authorList>
            <person name="Jackson A.P."/>
            <person name="Gamble J.A."/>
            <person name="Yeomans T."/>
            <person name="Moran G.P."/>
            <person name="Saunders D."/>
            <person name="Harris D."/>
            <person name="Aslett M."/>
            <person name="Barrell J.F."/>
            <person name="Butler G."/>
            <person name="Citiulo F."/>
            <person name="Coleman D.C."/>
            <person name="de Groot P.W.J."/>
            <person name="Goodwin T.J."/>
            <person name="Quail M.A."/>
            <person name="McQuillan J."/>
            <person name="Munro C.A."/>
            <person name="Pain A."/>
            <person name="Poulter R.T."/>
            <person name="Rajandream M.A."/>
            <person name="Renauld H."/>
            <person name="Spiering M.J."/>
            <person name="Tivey A."/>
            <person name="Gow N.A.R."/>
            <person name="Barrell B."/>
            <person name="Sullivan D.J."/>
            <person name="Berriman M."/>
        </authorList>
    </citation>
    <scope>NUCLEOTIDE SEQUENCE [LARGE SCALE GENOMIC DNA]</scope>
    <source>
        <strain>CD36 / ATCC MYA-646 / CBS 7987 / NCPF 3949 / NRRL Y-17841</strain>
    </source>
</reference>
<name>IRC6_CANDC</name>
<evidence type="ECO:0000250" key="1"/>
<evidence type="ECO:0000305" key="2"/>
<keyword id="KW-0160">Chromosomal rearrangement</keyword>
<comment type="function">
    <text evidence="1">Involved in gross chromosomal rearrangements (GCRs) and telomere healing.</text>
</comment>
<comment type="similarity">
    <text evidence="2">Belongs to the IRC6 family.</text>
</comment>
<accession>B9WG98</accession>
<protein>
    <recommendedName>
        <fullName>Increased recombination centers protein 6</fullName>
    </recommendedName>
</protein>
<gene>
    <name type="primary">IRC6</name>
    <name type="ORF">CD36_43950</name>
</gene>
<sequence length="275" mass="31676">MIPNHILILGSPNSGKLRIANLISRNEEIPQLEDAESHSGLIIKTSLRTKYYFLKLNILIDEYLESKETPDESKLSELHKWYQEFKSEEFGELREVLDGLMFTINMKTDSISFIGEALEIIEQIKLSLGDEESFHNWGGFIAVVGSCPVNQVVEDDVVLEIEDMVLSHGLEFINLSTEGENEYKEKQGKDRIVELVESHDWTNLEMVKVDSKQYEANKLAKIESMKHKLINEKEELDLDDIFKKLNLARDHASSLTQNEKDKYANKIIDEIIDFL</sequence>
<feature type="chain" id="PRO_0000399218" description="Increased recombination centers protein 6">
    <location>
        <begin position="1"/>
        <end position="275"/>
    </location>
</feature>
<dbReference type="EMBL" id="FM992691">
    <property type="protein sequence ID" value="CAX42270.1"/>
    <property type="molecule type" value="Genomic_DNA"/>
</dbReference>
<dbReference type="RefSeq" id="XP_002420052.1">
    <property type="nucleotide sequence ID" value="XM_002420007.1"/>
</dbReference>
<dbReference type="SMR" id="B9WG98"/>
<dbReference type="GeneID" id="8047888"/>
<dbReference type="KEGG" id="cdu:CD36_43950"/>
<dbReference type="CGD" id="CAL0000162320">
    <property type="gene designation" value="Cd36_43950"/>
</dbReference>
<dbReference type="VEuPathDB" id="FungiDB:CD36_43950"/>
<dbReference type="eggNOG" id="ENOG502SAXB">
    <property type="taxonomic scope" value="Eukaryota"/>
</dbReference>
<dbReference type="HOGENOM" id="CLU_064540_0_0_1"/>
<dbReference type="OrthoDB" id="10261384at2759"/>
<dbReference type="Proteomes" id="UP000002605">
    <property type="component" value="Chromosome 4"/>
</dbReference>
<dbReference type="GO" id="GO:0030674">
    <property type="term" value="F:protein-macromolecule adaptor activity"/>
    <property type="evidence" value="ECO:0007669"/>
    <property type="project" value="TreeGrafter"/>
</dbReference>
<dbReference type="GO" id="GO:0016192">
    <property type="term" value="P:vesicle-mediated transport"/>
    <property type="evidence" value="ECO:0007669"/>
    <property type="project" value="InterPro"/>
</dbReference>
<dbReference type="Gene3D" id="3.40.50.11960">
    <property type="match status" value="1"/>
</dbReference>
<dbReference type="InterPro" id="IPR034627">
    <property type="entry name" value="Irc6"/>
</dbReference>
<dbReference type="PANTHER" id="PTHR28043">
    <property type="entry name" value="INCREASED RECOMBINATION CENTERS PROTEIN 6"/>
    <property type="match status" value="1"/>
</dbReference>
<dbReference type="PANTHER" id="PTHR28043:SF1">
    <property type="entry name" value="INCREASED RECOMBINATION CENTERS PROTEIN 6"/>
    <property type="match status" value="1"/>
</dbReference>
<dbReference type="Pfam" id="PF10199">
    <property type="entry name" value="Adaptin_binding"/>
    <property type="match status" value="1"/>
</dbReference>
<organism>
    <name type="scientific">Candida dubliniensis (strain CD36 / ATCC MYA-646 / CBS 7987 / NCPF 3949 / NRRL Y-17841)</name>
    <name type="common">Yeast</name>
    <dbReference type="NCBI Taxonomy" id="573826"/>
    <lineage>
        <taxon>Eukaryota</taxon>
        <taxon>Fungi</taxon>
        <taxon>Dikarya</taxon>
        <taxon>Ascomycota</taxon>
        <taxon>Saccharomycotina</taxon>
        <taxon>Pichiomycetes</taxon>
        <taxon>Debaryomycetaceae</taxon>
        <taxon>Candida/Lodderomyces clade</taxon>
        <taxon>Candida</taxon>
    </lineage>
</organism>